<protein>
    <recommendedName>
        <fullName evidence="2">HTH-type transcriptional regulator BetI</fullName>
    </recommendedName>
</protein>
<gene>
    <name evidence="2" type="primary">betI</name>
    <name type="ordered locus">Smal_1834</name>
</gene>
<name>BETI_STRM5</name>
<organism>
    <name type="scientific">Stenotrophomonas maltophilia (strain R551-3)</name>
    <dbReference type="NCBI Taxonomy" id="391008"/>
    <lineage>
        <taxon>Bacteria</taxon>
        <taxon>Pseudomonadati</taxon>
        <taxon>Pseudomonadota</taxon>
        <taxon>Gammaproteobacteria</taxon>
        <taxon>Lysobacterales</taxon>
        <taxon>Lysobacteraceae</taxon>
        <taxon>Stenotrophomonas</taxon>
        <taxon>Stenotrophomonas maltophilia group</taxon>
    </lineage>
</organism>
<keyword id="KW-0238">DNA-binding</keyword>
<keyword id="KW-0678">Repressor</keyword>
<keyword id="KW-0804">Transcription</keyword>
<keyword id="KW-0805">Transcription regulation</keyword>
<reference key="1">
    <citation type="submission" date="2008-06" db="EMBL/GenBank/DDBJ databases">
        <title>Complete sequence of Stenotrophomonas maltophilia R551-3.</title>
        <authorList>
            <consortium name="US DOE Joint Genome Institute"/>
            <person name="Lucas S."/>
            <person name="Copeland A."/>
            <person name="Lapidus A."/>
            <person name="Glavina del Rio T."/>
            <person name="Dalin E."/>
            <person name="Tice H."/>
            <person name="Pitluck S."/>
            <person name="Chain P."/>
            <person name="Malfatti S."/>
            <person name="Shin M."/>
            <person name="Vergez L."/>
            <person name="Lang D."/>
            <person name="Schmutz J."/>
            <person name="Larimer F."/>
            <person name="Land M."/>
            <person name="Hauser L."/>
            <person name="Kyrpides N."/>
            <person name="Mikhailova N."/>
            <person name="Taghavi S."/>
            <person name="Monchy S."/>
            <person name="Newman L."/>
            <person name="Vangronsveld J."/>
            <person name="van der Lelie D."/>
            <person name="Richardson P."/>
        </authorList>
    </citation>
    <scope>NUCLEOTIDE SEQUENCE [LARGE SCALE GENOMIC DNA]</scope>
    <source>
        <strain>R551-3</strain>
    </source>
</reference>
<comment type="function">
    <text evidence="1">Repressor involved in the biosynthesis of the osmoprotectant glycine betaine. It represses transcription of the choline transporter BetT and the genes of BetAB involved in the synthesis of glycine betaine (By similarity).</text>
</comment>
<comment type="pathway">
    <text>Amine and polyamine biosynthesis; betaine biosynthesis via choline pathway [regulation].</text>
</comment>
<dbReference type="EMBL" id="CP001111">
    <property type="protein sequence ID" value="ACF51538.1"/>
    <property type="molecule type" value="Genomic_DNA"/>
</dbReference>
<dbReference type="RefSeq" id="WP_012510944.1">
    <property type="nucleotide sequence ID" value="NC_011071.1"/>
</dbReference>
<dbReference type="SMR" id="B4SHW1"/>
<dbReference type="STRING" id="391008.Smal_1834"/>
<dbReference type="KEGG" id="smt:Smal_1834"/>
<dbReference type="eggNOG" id="COG1309">
    <property type="taxonomic scope" value="Bacteria"/>
</dbReference>
<dbReference type="HOGENOM" id="CLU_069356_15_4_6"/>
<dbReference type="OrthoDB" id="7618612at2"/>
<dbReference type="UniPathway" id="UPA00529"/>
<dbReference type="Proteomes" id="UP000001867">
    <property type="component" value="Chromosome"/>
</dbReference>
<dbReference type="GO" id="GO:0003700">
    <property type="term" value="F:DNA-binding transcription factor activity"/>
    <property type="evidence" value="ECO:0007669"/>
    <property type="project" value="UniProtKB-UniRule"/>
</dbReference>
<dbReference type="GO" id="GO:0000976">
    <property type="term" value="F:transcription cis-regulatory region binding"/>
    <property type="evidence" value="ECO:0007669"/>
    <property type="project" value="TreeGrafter"/>
</dbReference>
<dbReference type="GO" id="GO:0019285">
    <property type="term" value="P:glycine betaine biosynthetic process from choline"/>
    <property type="evidence" value="ECO:0007669"/>
    <property type="project" value="UniProtKB-UniRule"/>
</dbReference>
<dbReference type="GO" id="GO:0045892">
    <property type="term" value="P:negative regulation of DNA-templated transcription"/>
    <property type="evidence" value="ECO:0007669"/>
    <property type="project" value="UniProtKB-UniRule"/>
</dbReference>
<dbReference type="Gene3D" id="1.10.357.10">
    <property type="entry name" value="Tetracycline Repressor, domain 2"/>
    <property type="match status" value="1"/>
</dbReference>
<dbReference type="HAMAP" id="MF_00768">
    <property type="entry name" value="HTH_type_BetI"/>
    <property type="match status" value="1"/>
</dbReference>
<dbReference type="InterPro" id="IPR039538">
    <property type="entry name" value="BetI_C"/>
</dbReference>
<dbReference type="InterPro" id="IPR009057">
    <property type="entry name" value="Homeodomain-like_sf"/>
</dbReference>
<dbReference type="InterPro" id="IPR050109">
    <property type="entry name" value="HTH-type_TetR-like_transc_reg"/>
</dbReference>
<dbReference type="InterPro" id="IPR001647">
    <property type="entry name" value="HTH_TetR"/>
</dbReference>
<dbReference type="InterPro" id="IPR036271">
    <property type="entry name" value="Tet_transcr_reg_TetR-rel_C_sf"/>
</dbReference>
<dbReference type="InterPro" id="IPR017757">
    <property type="entry name" value="Tscrpt_rep_BetI"/>
</dbReference>
<dbReference type="NCBIfam" id="TIGR03384">
    <property type="entry name" value="betaine_BetI"/>
    <property type="match status" value="1"/>
</dbReference>
<dbReference type="NCBIfam" id="NF001978">
    <property type="entry name" value="PRK00767.1"/>
    <property type="match status" value="1"/>
</dbReference>
<dbReference type="PANTHER" id="PTHR30055:SF234">
    <property type="entry name" value="HTH-TYPE TRANSCRIPTIONAL REGULATOR BETI"/>
    <property type="match status" value="1"/>
</dbReference>
<dbReference type="PANTHER" id="PTHR30055">
    <property type="entry name" value="HTH-TYPE TRANSCRIPTIONAL REGULATOR RUTR"/>
    <property type="match status" value="1"/>
</dbReference>
<dbReference type="Pfam" id="PF13977">
    <property type="entry name" value="TetR_C_6"/>
    <property type="match status" value="1"/>
</dbReference>
<dbReference type="Pfam" id="PF00440">
    <property type="entry name" value="TetR_N"/>
    <property type="match status" value="1"/>
</dbReference>
<dbReference type="SUPFAM" id="SSF46689">
    <property type="entry name" value="Homeodomain-like"/>
    <property type="match status" value="1"/>
</dbReference>
<dbReference type="SUPFAM" id="SSF48498">
    <property type="entry name" value="Tetracyclin repressor-like, C-terminal domain"/>
    <property type="match status" value="1"/>
</dbReference>
<dbReference type="PROSITE" id="PS50977">
    <property type="entry name" value="HTH_TETR_2"/>
    <property type="match status" value="1"/>
</dbReference>
<evidence type="ECO:0000250" key="1"/>
<evidence type="ECO:0000255" key="2">
    <source>
        <dbReference type="HAMAP-Rule" id="MF_00768"/>
    </source>
</evidence>
<sequence>MPKKGVEPVRREQLIRATFQTIDEIGMADATVATIAKKAGLSSGIVAHYFGDKDGLLNAAMRQILRELKEAVARYRADAGDDPRDQLRAIVDGNFDDSQINGTAMRVWLTFWAASMHQPELARLQRANDQRLFSNLCHQFNRLLPHPQARLAARGLAAMIDGLWLRGSLVGGQFNAEKSRRIAYGYIDFQLQAAAL</sequence>
<feature type="chain" id="PRO_1000133669" description="HTH-type transcriptional regulator BetI">
    <location>
        <begin position="1"/>
        <end position="196"/>
    </location>
</feature>
<feature type="domain" description="HTH tetR-type" evidence="2">
    <location>
        <begin position="8"/>
        <end position="68"/>
    </location>
</feature>
<feature type="DNA-binding region" description="H-T-H motif" evidence="2">
    <location>
        <begin position="31"/>
        <end position="50"/>
    </location>
</feature>
<accession>B4SHW1</accession>
<proteinExistence type="inferred from homology"/>